<protein>
    <recommendedName>
        <fullName evidence="1">Putative 3-methyladenine DNA glycosylase</fullName>
        <ecNumber evidence="1">3.2.2.-</ecNumber>
    </recommendedName>
</protein>
<sequence length="188" mass="21226">MYNILKKSFYKQKSLDVASSLLGKMLLFNQHKGIITETEAYIGQDDQAAHSFHGYTKRTAVMFGNPGFSYVYLIYGMYHCLNVVTEPEGFPAAILIRSIILLSKNTPHTKVNGPGKICKILHITKEHNNIDMTANHSFCICDTNLNIDDYICTPRIGISKATDKFWRLVIPNVTSLQYIDTKLVCTLT</sequence>
<dbReference type="EC" id="3.2.2.-" evidence="1"/>
<dbReference type="EMBL" id="CR925677">
    <property type="protein sequence ID" value="CAI28198.1"/>
    <property type="molecule type" value="Genomic_DNA"/>
</dbReference>
<dbReference type="RefSeq" id="WP_011255820.1">
    <property type="nucleotide sequence ID" value="NC_006831.1"/>
</dbReference>
<dbReference type="SMR" id="Q5FG73"/>
<dbReference type="KEGG" id="erg:ERGA_CDS_07460"/>
<dbReference type="HOGENOM" id="CLU_060471_4_1_5"/>
<dbReference type="OrthoDB" id="9794313at2"/>
<dbReference type="Proteomes" id="UP000000533">
    <property type="component" value="Chromosome"/>
</dbReference>
<dbReference type="GO" id="GO:0003905">
    <property type="term" value="F:alkylbase DNA N-glycosylase activity"/>
    <property type="evidence" value="ECO:0007669"/>
    <property type="project" value="InterPro"/>
</dbReference>
<dbReference type="GO" id="GO:0003677">
    <property type="term" value="F:DNA binding"/>
    <property type="evidence" value="ECO:0007669"/>
    <property type="project" value="InterPro"/>
</dbReference>
<dbReference type="GO" id="GO:0006284">
    <property type="term" value="P:base-excision repair"/>
    <property type="evidence" value="ECO:0007669"/>
    <property type="project" value="InterPro"/>
</dbReference>
<dbReference type="CDD" id="cd00540">
    <property type="entry name" value="AAG"/>
    <property type="match status" value="1"/>
</dbReference>
<dbReference type="Gene3D" id="3.10.300.10">
    <property type="entry name" value="Methylpurine-DNA glycosylase (MPG)"/>
    <property type="match status" value="1"/>
</dbReference>
<dbReference type="HAMAP" id="MF_00527">
    <property type="entry name" value="3MGH"/>
    <property type="match status" value="1"/>
</dbReference>
<dbReference type="InterPro" id="IPR011034">
    <property type="entry name" value="Formyl_transferase-like_C_sf"/>
</dbReference>
<dbReference type="InterPro" id="IPR003180">
    <property type="entry name" value="MPG"/>
</dbReference>
<dbReference type="InterPro" id="IPR036995">
    <property type="entry name" value="MPG_sf"/>
</dbReference>
<dbReference type="NCBIfam" id="TIGR00567">
    <property type="entry name" value="3mg"/>
    <property type="match status" value="1"/>
</dbReference>
<dbReference type="NCBIfam" id="NF002004">
    <property type="entry name" value="PRK00802.1-4"/>
    <property type="match status" value="1"/>
</dbReference>
<dbReference type="PANTHER" id="PTHR10429">
    <property type="entry name" value="DNA-3-METHYLADENINE GLYCOSYLASE"/>
    <property type="match status" value="1"/>
</dbReference>
<dbReference type="PANTHER" id="PTHR10429:SF0">
    <property type="entry name" value="DNA-3-METHYLADENINE GLYCOSYLASE"/>
    <property type="match status" value="1"/>
</dbReference>
<dbReference type="Pfam" id="PF02245">
    <property type="entry name" value="Pur_DNA_glyco"/>
    <property type="match status" value="1"/>
</dbReference>
<dbReference type="SUPFAM" id="SSF50486">
    <property type="entry name" value="FMT C-terminal domain-like"/>
    <property type="match status" value="1"/>
</dbReference>
<accession>Q5FG73</accession>
<organism>
    <name type="scientific">Ehrlichia ruminantium (strain Gardel)</name>
    <dbReference type="NCBI Taxonomy" id="302409"/>
    <lineage>
        <taxon>Bacteria</taxon>
        <taxon>Pseudomonadati</taxon>
        <taxon>Pseudomonadota</taxon>
        <taxon>Alphaproteobacteria</taxon>
        <taxon>Rickettsiales</taxon>
        <taxon>Anaplasmataceae</taxon>
        <taxon>Ehrlichia</taxon>
    </lineage>
</organism>
<reference key="1">
    <citation type="journal article" date="2006" name="J. Bacteriol.">
        <title>Comparative genomic analysis of three strains of Ehrlichia ruminantium reveals an active process of genome size plasticity.</title>
        <authorList>
            <person name="Frutos R."/>
            <person name="Viari A."/>
            <person name="Ferraz C."/>
            <person name="Morgat A."/>
            <person name="Eychenie S."/>
            <person name="Kandassamy Y."/>
            <person name="Chantal I."/>
            <person name="Bensaid A."/>
            <person name="Coissac E."/>
            <person name="Vachiery N."/>
            <person name="Demaille J."/>
            <person name="Martinez D."/>
        </authorList>
    </citation>
    <scope>NUCLEOTIDE SEQUENCE [LARGE SCALE GENOMIC DNA]</scope>
    <source>
        <strain>Gardel</strain>
    </source>
</reference>
<comment type="similarity">
    <text evidence="1">Belongs to the DNA glycosylase MPG family.</text>
</comment>
<evidence type="ECO:0000255" key="1">
    <source>
        <dbReference type="HAMAP-Rule" id="MF_00527"/>
    </source>
</evidence>
<keyword id="KW-0227">DNA damage</keyword>
<keyword id="KW-0234">DNA repair</keyword>
<keyword id="KW-0378">Hydrolase</keyword>
<gene>
    <name type="ordered locus">ERGA_CDS_07460</name>
</gene>
<name>3MGH_EHRRG</name>
<proteinExistence type="inferred from homology"/>
<feature type="chain" id="PRO_0000265018" description="Putative 3-methyladenine DNA glycosylase">
    <location>
        <begin position="1"/>
        <end position="188"/>
    </location>
</feature>